<accession>B5EFJ1</accession>
<reference key="1">
    <citation type="submission" date="2008-07" db="EMBL/GenBank/DDBJ databases">
        <title>Complete sequence of Geobacter bemidjiensis BEM.</title>
        <authorList>
            <consortium name="US DOE Joint Genome Institute"/>
            <person name="Lucas S."/>
            <person name="Copeland A."/>
            <person name="Lapidus A."/>
            <person name="Glavina del Rio T."/>
            <person name="Dalin E."/>
            <person name="Tice H."/>
            <person name="Bruce D."/>
            <person name="Goodwin L."/>
            <person name="Pitluck S."/>
            <person name="Kiss H."/>
            <person name="Brettin T."/>
            <person name="Detter J.C."/>
            <person name="Han C."/>
            <person name="Kuske C.R."/>
            <person name="Schmutz J."/>
            <person name="Larimer F."/>
            <person name="Land M."/>
            <person name="Hauser L."/>
            <person name="Kyrpides N."/>
            <person name="Lykidis A."/>
            <person name="Lovley D."/>
            <person name="Richardson P."/>
        </authorList>
    </citation>
    <scope>NUCLEOTIDE SEQUENCE [LARGE SCALE GENOMIC DNA]</scope>
    <source>
        <strain>ATCC BAA-1014 / DSM 16622 / JCM 12645 / Bem</strain>
    </source>
</reference>
<keyword id="KW-0066">ATP synthesis</keyword>
<keyword id="KW-0997">Cell inner membrane</keyword>
<keyword id="KW-1003">Cell membrane</keyword>
<keyword id="KW-0138">CF(0)</keyword>
<keyword id="KW-0375">Hydrogen ion transport</keyword>
<keyword id="KW-0406">Ion transport</keyword>
<keyword id="KW-0472">Membrane</keyword>
<keyword id="KW-1185">Reference proteome</keyword>
<keyword id="KW-0812">Transmembrane</keyword>
<keyword id="KW-1133">Transmembrane helix</keyword>
<keyword id="KW-0813">Transport</keyword>
<feature type="chain" id="PRO_5000394531" description="ATP synthase subunit b">
    <location>
        <begin position="1"/>
        <end position="199"/>
    </location>
</feature>
<feature type="transmembrane region" description="Helical" evidence="1">
    <location>
        <begin position="5"/>
        <end position="25"/>
    </location>
</feature>
<proteinExistence type="inferred from homology"/>
<dbReference type="EMBL" id="CP001124">
    <property type="protein sequence ID" value="ACH40946.1"/>
    <property type="molecule type" value="Genomic_DNA"/>
</dbReference>
<dbReference type="RefSeq" id="WP_012532380.1">
    <property type="nucleotide sequence ID" value="NC_011146.1"/>
</dbReference>
<dbReference type="SMR" id="B5EFJ1"/>
<dbReference type="STRING" id="404380.Gbem_3954"/>
<dbReference type="KEGG" id="gbm:Gbem_3954"/>
<dbReference type="eggNOG" id="COG0711">
    <property type="taxonomic scope" value="Bacteria"/>
</dbReference>
<dbReference type="HOGENOM" id="CLU_079215_3_2_7"/>
<dbReference type="OrthoDB" id="5471016at2"/>
<dbReference type="Proteomes" id="UP000008825">
    <property type="component" value="Chromosome"/>
</dbReference>
<dbReference type="GO" id="GO:0005886">
    <property type="term" value="C:plasma membrane"/>
    <property type="evidence" value="ECO:0007669"/>
    <property type="project" value="UniProtKB-SubCell"/>
</dbReference>
<dbReference type="GO" id="GO:0045259">
    <property type="term" value="C:proton-transporting ATP synthase complex"/>
    <property type="evidence" value="ECO:0007669"/>
    <property type="project" value="UniProtKB-KW"/>
</dbReference>
<dbReference type="GO" id="GO:0046933">
    <property type="term" value="F:proton-transporting ATP synthase activity, rotational mechanism"/>
    <property type="evidence" value="ECO:0007669"/>
    <property type="project" value="UniProtKB-UniRule"/>
</dbReference>
<dbReference type="CDD" id="cd06503">
    <property type="entry name" value="ATP-synt_Fo_b"/>
    <property type="match status" value="1"/>
</dbReference>
<dbReference type="HAMAP" id="MF_01398">
    <property type="entry name" value="ATP_synth_b_bprime"/>
    <property type="match status" value="1"/>
</dbReference>
<dbReference type="InterPro" id="IPR002146">
    <property type="entry name" value="ATP_synth_b/b'su_bac/chlpt"/>
</dbReference>
<dbReference type="PANTHER" id="PTHR34264">
    <property type="entry name" value="ATP SYNTHASE SUBUNIT B, CHLOROPLASTIC"/>
    <property type="match status" value="1"/>
</dbReference>
<dbReference type="PANTHER" id="PTHR34264:SF3">
    <property type="entry name" value="ATP SYNTHASE SUBUNIT B, CHLOROPLASTIC"/>
    <property type="match status" value="1"/>
</dbReference>
<dbReference type="Pfam" id="PF00430">
    <property type="entry name" value="ATP-synt_B"/>
    <property type="match status" value="1"/>
</dbReference>
<comment type="function">
    <text evidence="1">F(1)F(0) ATP synthase produces ATP from ADP in the presence of a proton or sodium gradient. F-type ATPases consist of two structural domains, F(1) containing the extramembraneous catalytic core and F(0) containing the membrane proton channel, linked together by a central stalk and a peripheral stalk. During catalysis, ATP synthesis in the catalytic domain of F(1) is coupled via a rotary mechanism of the central stalk subunits to proton translocation.</text>
</comment>
<comment type="function">
    <text evidence="1">Component of the F(0) channel, it forms part of the peripheral stalk, linking F(1) to F(0).</text>
</comment>
<comment type="subunit">
    <text evidence="1">F-type ATPases have 2 components, F(1) - the catalytic core - and F(0) - the membrane proton channel. F(1) has five subunits: alpha(3), beta(3), gamma(1), delta(1), epsilon(1). F(0) has three main subunits: a(1), b(2) and c(10-14). The alpha and beta chains form an alternating ring which encloses part of the gamma chain. F(1) is attached to F(0) by a central stalk formed by the gamma and epsilon chains, while a peripheral stalk is formed by the delta and b chains.</text>
</comment>
<comment type="subcellular location">
    <subcellularLocation>
        <location evidence="1">Cell inner membrane</location>
        <topology evidence="1">Single-pass membrane protein</topology>
    </subcellularLocation>
</comment>
<comment type="similarity">
    <text evidence="1">Belongs to the ATPase B chain family.</text>
</comment>
<name>ATPF_CITBB</name>
<evidence type="ECO:0000255" key="1">
    <source>
        <dbReference type="HAMAP-Rule" id="MF_01398"/>
    </source>
</evidence>
<sequence>MHKKSFVTTLSVCVMILGLAALGFAQEAAEGGAHHANSGAQMKDFMWRTIDFALLVAIAVWALKKADVKGSLAARRSGIEKTLQEAVAAKEAAEKKFAEYSQRLDQANKEIEVISANMKREGELEKERIIAEANDAAARIKAQAEASAAQEVLKAKAELRAEAAKLAVELAEQKIVKNIAKGDQDKLVGEYISKVVTLH</sequence>
<protein>
    <recommendedName>
        <fullName evidence="1">ATP synthase subunit b</fullName>
    </recommendedName>
    <alternativeName>
        <fullName evidence="1">ATP synthase F(0) sector subunit b</fullName>
    </alternativeName>
    <alternativeName>
        <fullName evidence="1">ATPase subunit I</fullName>
    </alternativeName>
    <alternativeName>
        <fullName evidence="1">F-type ATPase subunit b</fullName>
        <shortName evidence="1">F-ATPase subunit b</shortName>
    </alternativeName>
</protein>
<organism>
    <name type="scientific">Citrifermentans bemidjiense (strain ATCC BAA-1014 / DSM 16622 / JCM 12645 / Bem)</name>
    <name type="common">Geobacter bemidjiensis</name>
    <dbReference type="NCBI Taxonomy" id="404380"/>
    <lineage>
        <taxon>Bacteria</taxon>
        <taxon>Pseudomonadati</taxon>
        <taxon>Thermodesulfobacteriota</taxon>
        <taxon>Desulfuromonadia</taxon>
        <taxon>Geobacterales</taxon>
        <taxon>Geobacteraceae</taxon>
        <taxon>Citrifermentans</taxon>
    </lineage>
</organism>
<gene>
    <name evidence="1" type="primary">atpF</name>
    <name type="ordered locus">Gbem_3954</name>
</gene>